<comment type="function">
    <text evidence="1">May function as a scaffold on which the coordinated assembly of proteins can occur. May play a role as an adapter that, via its PDZ domain, localizes LIM-binding proteins to actin filaments of both skeletal muscle and nonmuscle tissues. May be involved in bone formation (By similarity).</text>
</comment>
<comment type="subunit">
    <text evidence="1 5">Interacts with various PKC isoforms through the LIM zinc-binding domains. Interacts with TPM2 (By similarity). Interacts with TBX4 and TBX5.</text>
</comment>
<comment type="interaction">
    <interactant intactId="EBI-6693710">
        <id>Q679P3</id>
    </interactant>
    <interactant intactId="EBI-6663926">
        <id>O93288</id>
        <label>TBX4</label>
    </interactant>
    <organismsDiffer>false</organismsDiffer>
    <experiments>3</experiments>
</comment>
<comment type="interaction">
    <interactant intactId="EBI-6693710">
        <id>Q679P3</id>
    </interactant>
    <interactant intactId="EBI-6663870">
        <id>Q9PWE8</id>
        <label>TBX5</label>
    </interactant>
    <organismsDiffer>false</organismsDiffer>
    <experiments>4</experiments>
</comment>
<comment type="subcellular location">
    <subcellularLocation>
        <location evidence="5">Cytoplasm</location>
        <location evidence="5">Cytoskeleton</location>
    </subcellularLocation>
    <subcellularLocation>
        <location evidence="5">Cytoplasm</location>
        <location evidence="5">Myofibril</location>
        <location evidence="5">Sarcomere</location>
        <location evidence="5">Z line</location>
    </subcellularLocation>
    <text evidence="1">Colocalizes with TPM2 near the Z line in muscle (By similarity). Colocalizes with TBX4 and TBX5 to actin filaments.</text>
</comment>
<comment type="developmental stage">
    <text evidence="5">Expressed in the presumptive fore- and hindlimb. Continues to be expressed in the limb mesenchyme throughout forelimb and hindlimb bud outgrowth. Expressed in the developing heart and eye.</text>
</comment>
<comment type="domain">
    <text>The LIM zinc-binding 2 (LIM 2) interacts with TBX4.</text>
</comment>
<comment type="domain">
    <text evidence="1">The LIM zinc-binding 3 (LIM 3) domain provides the structural basis for recognition of tyrosine-containing tight turn structures (By similarity). This domain is necessary and sufficient for interaction with TBX5.</text>
</comment>
<comment type="domain">
    <text evidence="1">Anchored to cell periphery via its N-terminal PDZ domain.</text>
</comment>
<keyword id="KW-0963">Cytoplasm</keyword>
<keyword id="KW-0206">Cytoskeleton</keyword>
<keyword id="KW-0217">Developmental protein</keyword>
<keyword id="KW-0221">Differentiation</keyword>
<keyword id="KW-0440">LIM domain</keyword>
<keyword id="KW-0479">Metal-binding</keyword>
<keyword id="KW-0892">Osteogenesis</keyword>
<keyword id="KW-1185">Reference proteome</keyword>
<keyword id="KW-0677">Repeat</keyword>
<keyword id="KW-0862">Zinc</keyword>
<accession>Q679P3</accession>
<accession>Q5ZJY4</accession>
<protein>
    <recommendedName>
        <fullName>PDZ and LIM domain protein 7</fullName>
    </recommendedName>
    <alternativeName>
        <fullName>LIM mineralization protein</fullName>
        <shortName>LMP</shortName>
    </alternativeName>
</protein>
<dbReference type="EMBL" id="AY376690">
    <property type="protein sequence ID" value="AAR24913.1"/>
    <property type="molecule type" value="mRNA"/>
</dbReference>
<dbReference type="EMBL" id="AJ720300">
    <property type="protein sequence ID" value="CAG31959.1"/>
    <property type="molecule type" value="mRNA"/>
</dbReference>
<dbReference type="RefSeq" id="NP_001005345.2">
    <property type="nucleotide sequence ID" value="NM_001005345.1"/>
</dbReference>
<dbReference type="SMR" id="Q679P3"/>
<dbReference type="FunCoup" id="Q679P3">
    <property type="interactions" value="1539"/>
</dbReference>
<dbReference type="IntAct" id="Q679P3">
    <property type="interactions" value="2"/>
</dbReference>
<dbReference type="STRING" id="9031.ENSGALP00000063573"/>
<dbReference type="GlyGen" id="Q679P3">
    <property type="glycosylation" value="3 sites"/>
</dbReference>
<dbReference type="PaxDb" id="9031-ENSGALP00000042621"/>
<dbReference type="GeneID" id="416362"/>
<dbReference type="KEGG" id="gga:416362"/>
<dbReference type="CTD" id="9260"/>
<dbReference type="VEuPathDB" id="HostDB:geneid_416362"/>
<dbReference type="eggNOG" id="KOG1703">
    <property type="taxonomic scope" value="Eukaryota"/>
</dbReference>
<dbReference type="InParanoid" id="Q679P3"/>
<dbReference type="OrthoDB" id="5911912at2759"/>
<dbReference type="PhylomeDB" id="Q679P3"/>
<dbReference type="PRO" id="PR:Q679P3"/>
<dbReference type="Proteomes" id="UP000000539">
    <property type="component" value="Unassembled WGS sequence"/>
</dbReference>
<dbReference type="GO" id="GO:0015629">
    <property type="term" value="C:actin cytoskeleton"/>
    <property type="evidence" value="ECO:0000314"/>
    <property type="project" value="AgBase"/>
</dbReference>
<dbReference type="GO" id="GO:0005884">
    <property type="term" value="C:actin filament"/>
    <property type="evidence" value="ECO:0000314"/>
    <property type="project" value="AgBase"/>
</dbReference>
<dbReference type="GO" id="GO:0005912">
    <property type="term" value="C:adherens junction"/>
    <property type="evidence" value="ECO:0000318"/>
    <property type="project" value="GO_Central"/>
</dbReference>
<dbReference type="GO" id="GO:0030864">
    <property type="term" value="C:cortical actin cytoskeleton"/>
    <property type="evidence" value="ECO:0000314"/>
    <property type="project" value="AgBase"/>
</dbReference>
<dbReference type="GO" id="GO:0005737">
    <property type="term" value="C:cytoplasm"/>
    <property type="evidence" value="ECO:0000314"/>
    <property type="project" value="AgBase"/>
</dbReference>
<dbReference type="GO" id="GO:0031941">
    <property type="term" value="C:filamentous actin"/>
    <property type="evidence" value="ECO:0000314"/>
    <property type="project" value="AgBase"/>
</dbReference>
<dbReference type="GO" id="GO:0048471">
    <property type="term" value="C:perinuclear region of cytoplasm"/>
    <property type="evidence" value="ECO:0000314"/>
    <property type="project" value="AgBase"/>
</dbReference>
<dbReference type="GO" id="GO:0001725">
    <property type="term" value="C:stress fiber"/>
    <property type="evidence" value="ECO:0000314"/>
    <property type="project" value="AgBase"/>
</dbReference>
<dbReference type="GO" id="GO:0030018">
    <property type="term" value="C:Z disc"/>
    <property type="evidence" value="ECO:0000318"/>
    <property type="project" value="GO_Central"/>
</dbReference>
<dbReference type="GO" id="GO:0003779">
    <property type="term" value="F:actin binding"/>
    <property type="evidence" value="ECO:0000318"/>
    <property type="project" value="GO_Central"/>
</dbReference>
<dbReference type="GO" id="GO:0140297">
    <property type="term" value="F:DNA-binding transcription factor binding"/>
    <property type="evidence" value="ECO:0000353"/>
    <property type="project" value="AgBase"/>
</dbReference>
<dbReference type="GO" id="GO:0046872">
    <property type="term" value="F:metal ion binding"/>
    <property type="evidence" value="ECO:0007669"/>
    <property type="project" value="UniProtKB-KW"/>
</dbReference>
<dbReference type="GO" id="GO:0051371">
    <property type="term" value="F:muscle alpha-actinin binding"/>
    <property type="evidence" value="ECO:0000318"/>
    <property type="project" value="GO_Central"/>
</dbReference>
<dbReference type="GO" id="GO:0008134">
    <property type="term" value="F:transcription factor binding"/>
    <property type="evidence" value="ECO:0000353"/>
    <property type="project" value="AgBase"/>
</dbReference>
<dbReference type="GO" id="GO:0030036">
    <property type="term" value="P:actin cytoskeleton organization"/>
    <property type="evidence" value="ECO:0000318"/>
    <property type="project" value="GO_Central"/>
</dbReference>
<dbReference type="GO" id="GO:0030154">
    <property type="term" value="P:cell differentiation"/>
    <property type="evidence" value="ECO:0007669"/>
    <property type="project" value="UniProtKB-KW"/>
</dbReference>
<dbReference type="GO" id="GO:0007507">
    <property type="term" value="P:heart development"/>
    <property type="evidence" value="ECO:0000318"/>
    <property type="project" value="GO_Central"/>
</dbReference>
<dbReference type="GO" id="GO:0061061">
    <property type="term" value="P:muscle structure development"/>
    <property type="evidence" value="ECO:0000318"/>
    <property type="project" value="GO_Central"/>
</dbReference>
<dbReference type="GO" id="GO:0043433">
    <property type="term" value="P:negative regulation of DNA-binding transcription factor activity"/>
    <property type="evidence" value="ECO:0000314"/>
    <property type="project" value="AgBase"/>
</dbReference>
<dbReference type="GO" id="GO:0006913">
    <property type="term" value="P:nucleocytoplasmic transport"/>
    <property type="evidence" value="ECO:0000314"/>
    <property type="project" value="AgBase"/>
</dbReference>
<dbReference type="GO" id="GO:0001503">
    <property type="term" value="P:ossification"/>
    <property type="evidence" value="ECO:0007669"/>
    <property type="project" value="UniProtKB-KW"/>
</dbReference>
<dbReference type="GO" id="GO:0032880">
    <property type="term" value="P:regulation of protein localization"/>
    <property type="evidence" value="ECO:0000314"/>
    <property type="project" value="AgBase"/>
</dbReference>
<dbReference type="CDD" id="cd09452">
    <property type="entry name" value="LIM1_Enigma"/>
    <property type="match status" value="1"/>
</dbReference>
<dbReference type="CDD" id="cd09456">
    <property type="entry name" value="LIM2_Enigma"/>
    <property type="match status" value="1"/>
</dbReference>
<dbReference type="CDD" id="cd06753">
    <property type="entry name" value="PDZ_PDLIM-like"/>
    <property type="match status" value="1"/>
</dbReference>
<dbReference type="FunFam" id="2.30.42.10:FF:000019">
    <property type="entry name" value="LIM domain binding 3 isoform 1"/>
    <property type="match status" value="1"/>
</dbReference>
<dbReference type="FunFam" id="2.10.110.10:FF:000010">
    <property type="entry name" value="PDZ and LIM domain protein 5"/>
    <property type="match status" value="1"/>
</dbReference>
<dbReference type="FunFam" id="2.10.110.10:FF:000014">
    <property type="entry name" value="PDZ and LIM domain protein 5"/>
    <property type="match status" value="1"/>
</dbReference>
<dbReference type="FunFam" id="2.10.110.10:FF:000020">
    <property type="entry name" value="PDZ and LIM domain protein 5"/>
    <property type="match status" value="1"/>
</dbReference>
<dbReference type="Gene3D" id="2.30.42.10">
    <property type="match status" value="1"/>
</dbReference>
<dbReference type="Gene3D" id="2.10.110.10">
    <property type="entry name" value="Cysteine Rich Protein"/>
    <property type="match status" value="3"/>
</dbReference>
<dbReference type="InterPro" id="IPR001478">
    <property type="entry name" value="PDZ"/>
</dbReference>
<dbReference type="InterPro" id="IPR050604">
    <property type="entry name" value="PDZ-LIM_domain"/>
</dbReference>
<dbReference type="InterPro" id="IPR036034">
    <property type="entry name" value="PDZ_sf"/>
</dbReference>
<dbReference type="InterPro" id="IPR001781">
    <property type="entry name" value="Znf_LIM"/>
</dbReference>
<dbReference type="PANTHER" id="PTHR24214:SF0">
    <property type="entry name" value="PDZ AND LIM DOMAIN PROTEIN 7"/>
    <property type="match status" value="1"/>
</dbReference>
<dbReference type="PANTHER" id="PTHR24214">
    <property type="entry name" value="PDZ AND LIM DOMAIN PROTEIN ZASP"/>
    <property type="match status" value="1"/>
</dbReference>
<dbReference type="Pfam" id="PF00412">
    <property type="entry name" value="LIM"/>
    <property type="match status" value="3"/>
</dbReference>
<dbReference type="Pfam" id="PF00595">
    <property type="entry name" value="PDZ"/>
    <property type="match status" value="1"/>
</dbReference>
<dbReference type="SMART" id="SM00132">
    <property type="entry name" value="LIM"/>
    <property type="match status" value="3"/>
</dbReference>
<dbReference type="SMART" id="SM00228">
    <property type="entry name" value="PDZ"/>
    <property type="match status" value="1"/>
</dbReference>
<dbReference type="SUPFAM" id="SSF57716">
    <property type="entry name" value="Glucocorticoid receptor-like (DNA-binding domain)"/>
    <property type="match status" value="4"/>
</dbReference>
<dbReference type="SUPFAM" id="SSF50156">
    <property type="entry name" value="PDZ domain-like"/>
    <property type="match status" value="1"/>
</dbReference>
<dbReference type="PROSITE" id="PS00478">
    <property type="entry name" value="LIM_DOMAIN_1"/>
    <property type="match status" value="2"/>
</dbReference>
<dbReference type="PROSITE" id="PS50023">
    <property type="entry name" value="LIM_DOMAIN_2"/>
    <property type="match status" value="3"/>
</dbReference>
<dbReference type="PROSITE" id="PS50106">
    <property type="entry name" value="PDZ"/>
    <property type="match status" value="1"/>
</dbReference>
<name>PDLI7_CHICK</name>
<sequence>MESYKVMLNGPAPWGFRLQGGKDFSMPLSISRLTPGGKAAQAGVGVGDWVLYIDGESTGTMTHIEAQNRIRACGDRLCLTLSRAQNHLGKPQKDSLPCSEPPKYNFAPSTALNKTARPFGASSPPNPRPGLVTKPVTYVPLAPACTPQHNGQVSVPDPSPGAAMKTEPGLAPRTPAATPGPTSRPPWAVDPSFAERYAPDKTSTVLSKHSQPATPTPMQNRSSIVQAAQQAPESPGRTPLCYKCNKIIRGRYLVALGHYYHPEEFTCCQCRKVLDEGGFFEEKGSIFCPKCYDTRYAPSCAKCKKKITGEVMHALKMTWHVQCFTCAACKTPIRNRAFYMEEGQPYCERDYEKMFGTKCRGCDFKIDAGDRFLEALGFSWHDTCFVCAICQTNLEGKTFYSKKDKPLCKSHAFSHV</sequence>
<proteinExistence type="evidence at protein level"/>
<evidence type="ECO:0000250" key="1"/>
<evidence type="ECO:0000255" key="2">
    <source>
        <dbReference type="PROSITE-ProRule" id="PRU00125"/>
    </source>
</evidence>
<evidence type="ECO:0000255" key="3">
    <source>
        <dbReference type="PROSITE-ProRule" id="PRU00143"/>
    </source>
</evidence>
<evidence type="ECO:0000256" key="4">
    <source>
        <dbReference type="SAM" id="MobiDB-lite"/>
    </source>
</evidence>
<evidence type="ECO:0000269" key="5">
    <source>
    </source>
</evidence>
<organism>
    <name type="scientific">Gallus gallus</name>
    <name type="common">Chicken</name>
    <dbReference type="NCBI Taxonomy" id="9031"/>
    <lineage>
        <taxon>Eukaryota</taxon>
        <taxon>Metazoa</taxon>
        <taxon>Chordata</taxon>
        <taxon>Craniata</taxon>
        <taxon>Vertebrata</taxon>
        <taxon>Euteleostomi</taxon>
        <taxon>Archelosauria</taxon>
        <taxon>Archosauria</taxon>
        <taxon>Dinosauria</taxon>
        <taxon>Saurischia</taxon>
        <taxon>Theropoda</taxon>
        <taxon>Coelurosauria</taxon>
        <taxon>Aves</taxon>
        <taxon>Neognathae</taxon>
        <taxon>Galloanserae</taxon>
        <taxon>Galliformes</taxon>
        <taxon>Phasianidae</taxon>
        <taxon>Phasianinae</taxon>
        <taxon>Gallus</taxon>
    </lineage>
</organism>
<reference key="1">
    <citation type="journal article" date="2004" name="Dev. Biol.">
        <title>Tbx5 and Tbx4 transcription factors interact with a new chicken PDZ-LIM protein in limb and heart development.</title>
        <authorList>
            <person name="Krause A."/>
            <person name="Zacharias W."/>
            <person name="Camarata T."/>
            <person name="Linkhart B."/>
            <person name="Law E."/>
            <person name="Lischke A."/>
            <person name="Miljan E."/>
            <person name="Simon H.-G."/>
        </authorList>
    </citation>
    <scope>NUCLEOTIDE SEQUENCE [MRNA]</scope>
    <scope>SUBCELLULAR LOCATION</scope>
    <scope>DEVELOPMENTAL STAGE</scope>
    <scope>INTERACTION WITH TBX4 AND TBX5</scope>
</reference>
<reference key="2">
    <citation type="journal article" date="2005" name="Genome Biol.">
        <title>Full-length cDNAs from chicken bursal lymphocytes to facilitate gene function analysis.</title>
        <authorList>
            <person name="Caldwell R.B."/>
            <person name="Kierzek A.M."/>
            <person name="Arakawa H."/>
            <person name="Bezzubov Y."/>
            <person name="Zaim J."/>
            <person name="Fiedler P."/>
            <person name="Kutter S."/>
            <person name="Blagodatski A."/>
            <person name="Kostovska D."/>
            <person name="Koter M."/>
            <person name="Plachy J."/>
            <person name="Carninci P."/>
            <person name="Hayashizaki Y."/>
            <person name="Buerstedde J.-M."/>
        </authorList>
    </citation>
    <scope>NUCLEOTIDE SEQUENCE [LARGE SCALE MRNA]</scope>
    <source>
        <strain>CB</strain>
        <tissue>Bursa of Fabricius</tissue>
    </source>
</reference>
<gene>
    <name type="primary">PDLIM7</name>
    <name type="synonym">LMP</name>
    <name type="ORF">RCJMB04_14g20</name>
</gene>
<feature type="chain" id="PRO_0000075884" description="PDZ and LIM domain protein 7">
    <location>
        <begin position="1"/>
        <end position="416"/>
    </location>
</feature>
<feature type="domain" description="PDZ" evidence="3">
    <location>
        <begin position="1"/>
        <end position="85"/>
    </location>
</feature>
<feature type="domain" description="LIM zinc-binding 1" evidence="2">
    <location>
        <begin position="239"/>
        <end position="297"/>
    </location>
</feature>
<feature type="domain" description="LIM zinc-binding 2" evidence="2">
    <location>
        <begin position="298"/>
        <end position="357"/>
    </location>
</feature>
<feature type="domain" description="LIM zinc-binding 3" evidence="2">
    <location>
        <begin position="358"/>
        <end position="416"/>
    </location>
</feature>
<feature type="region of interest" description="Disordered" evidence="4">
    <location>
        <begin position="145"/>
        <end position="191"/>
    </location>
</feature>
<feature type="region of interest" description="Disordered" evidence="4">
    <location>
        <begin position="202"/>
        <end position="221"/>
    </location>
</feature>
<feature type="compositionally biased region" description="Low complexity" evidence="4">
    <location>
        <begin position="168"/>
        <end position="181"/>
    </location>
</feature>